<comment type="function">
    <text evidence="1">Catalyzes the O-methylation, and thereby the inactivation, of catecholamine neurotransmitters and catechol hormones.</text>
</comment>
<comment type="catalytic activity">
    <reaction evidence="1">
        <text>a catechol + S-adenosyl-L-methionine = a guaiacol + S-adenosyl-L-homocysteine + H(+)</text>
        <dbReference type="Rhea" id="RHEA:17877"/>
        <dbReference type="ChEBI" id="CHEBI:15378"/>
        <dbReference type="ChEBI" id="CHEBI:33566"/>
        <dbReference type="ChEBI" id="CHEBI:57856"/>
        <dbReference type="ChEBI" id="CHEBI:59789"/>
        <dbReference type="ChEBI" id="CHEBI:134251"/>
        <dbReference type="EC" id="2.1.1.6"/>
    </reaction>
</comment>
<comment type="cofactor">
    <cofactor evidence="5">
        <name>Mg(2+)</name>
        <dbReference type="ChEBI" id="CHEBI:18420"/>
    </cofactor>
    <text evidence="5">Binds 1 Mg(2+) ion per subunit.</text>
</comment>
<comment type="subcellular location">
    <subcellularLocation>
        <location evidence="10">Secreted</location>
    </subcellularLocation>
</comment>
<comment type="tissue specificity">
    <text evidence="8">Strongly expressed in eye, diencephalon, spinal cord, hindbrain, liver, kidney and telencephalon. Also detected at very low levels in muscle, spleen, anterior gut and heart. In eye, expressed strongly in retina. In brain, expressed in the central part of the telencephalon, the periventricular gray zone of the optic tectum, the periglomerular nucleus, the olfactory bulb, and the region adjacent to the diencephalic ventricle in the hypothalamus. Expressed in gill, with strongest expression in gill filaments nearest the gill arch, and in esophageal epithelium.</text>
</comment>
<comment type="similarity">
    <text evidence="7">Belongs to the class I-like SAM-binding methyltransferase superfamily. Cation-dependent O-methyltransferase family.</text>
</comment>
<feature type="signal peptide" evidence="2">
    <location>
        <begin position="1"/>
        <end position="29"/>
    </location>
</feature>
<feature type="chain" id="PRO_0000444754" description="Catechol O-methyltransferase B" evidence="2">
    <location>
        <begin position="30"/>
        <end position="264"/>
    </location>
</feature>
<feature type="binding site" evidence="3">
    <location>
        <position position="92"/>
    </location>
    <ligand>
        <name>S-adenosyl-L-methionine</name>
        <dbReference type="ChEBI" id="CHEBI:59789"/>
    </ligand>
</feature>
<feature type="binding site" evidence="3">
    <location>
        <position position="122"/>
    </location>
    <ligand>
        <name>S-adenosyl-L-methionine</name>
        <dbReference type="ChEBI" id="CHEBI:59789"/>
    </ligand>
</feature>
<feature type="binding site" evidence="3">
    <location>
        <position position="140"/>
    </location>
    <ligand>
        <name>S-adenosyl-L-methionine</name>
        <dbReference type="ChEBI" id="CHEBI:59789"/>
    </ligand>
</feature>
<feature type="binding site" evidence="5">
    <location>
        <position position="191"/>
    </location>
    <ligand>
        <name>Mg(2+)</name>
        <dbReference type="ChEBI" id="CHEBI:18420"/>
    </ligand>
</feature>
<feature type="binding site" evidence="3">
    <location>
        <position position="191"/>
    </location>
    <ligand>
        <name>S-adenosyl-L-methionine</name>
        <dbReference type="ChEBI" id="CHEBI:59789"/>
    </ligand>
</feature>
<feature type="binding site" evidence="4">
    <location>
        <position position="194"/>
    </location>
    <ligand>
        <name>substrate</name>
    </ligand>
</feature>
<feature type="binding site" evidence="5">
    <location>
        <position position="219"/>
    </location>
    <ligand>
        <name>Mg(2+)</name>
        <dbReference type="ChEBI" id="CHEBI:18420"/>
    </ligand>
</feature>
<feature type="binding site" evidence="5">
    <location>
        <position position="220"/>
    </location>
    <ligand>
        <name>Mg(2+)</name>
        <dbReference type="ChEBI" id="CHEBI:18420"/>
    </ligand>
</feature>
<feature type="binding site" evidence="4">
    <location>
        <position position="220"/>
    </location>
    <ligand>
        <name>substrate</name>
    </ligand>
</feature>
<feature type="binding site" evidence="4">
    <location>
        <position position="249"/>
    </location>
    <ligand>
        <name>substrate</name>
    </ligand>
</feature>
<feature type="glycosylation site" description="N-linked (GlcNAc...) asparagine" evidence="6">
    <location>
        <position position="31"/>
    </location>
</feature>
<feature type="sequence conflict" description="In Ref. 1; CAE30427." evidence="10" ref="1">
    <original>C</original>
    <variation>W</variation>
    <location>
        <position position="207"/>
    </location>
</feature>
<dbReference type="EC" id="2.1.1.6" evidence="1"/>
<dbReference type="EMBL" id="AL844847">
    <property type="protein sequence ID" value="CAE30427.1"/>
    <property type="molecule type" value="Genomic_DNA"/>
</dbReference>
<dbReference type="EMBL" id="CR933820">
    <property type="status" value="NOT_ANNOTATED_CDS"/>
    <property type="molecule type" value="Genomic_DNA"/>
</dbReference>
<dbReference type="EMBL" id="BC134931">
    <property type="protein sequence ID" value="AAI34932.1"/>
    <property type="molecule type" value="mRNA"/>
</dbReference>
<dbReference type="RefSeq" id="NP_001077312.1">
    <property type="nucleotide sequence ID" value="NM_001083843.1"/>
</dbReference>
<dbReference type="RefSeq" id="XP_009304313.1">
    <property type="nucleotide sequence ID" value="XM_009306038.2"/>
</dbReference>
<dbReference type="SMR" id="A4IG53"/>
<dbReference type="FunCoup" id="A4IG53">
    <property type="interactions" value="778"/>
</dbReference>
<dbReference type="STRING" id="7955.ENSDARP00000038939"/>
<dbReference type="GlyCosmos" id="A4IG53">
    <property type="glycosylation" value="1 site, No reported glycans"/>
</dbReference>
<dbReference type="PaxDb" id="7955-ENSDARP00000038939"/>
<dbReference type="PeptideAtlas" id="A4IG53"/>
<dbReference type="Ensembl" id="ENSDART00000033702">
    <property type="protein sequence ID" value="ENSDARP00000038939"/>
    <property type="gene ID" value="ENSDARG00000025679"/>
</dbReference>
<dbReference type="GeneID" id="565370"/>
<dbReference type="KEGG" id="dre:565370"/>
<dbReference type="AGR" id="ZFIN:ZDB-GENE-040724-164"/>
<dbReference type="CTD" id="565370"/>
<dbReference type="ZFIN" id="ZDB-GENE-040724-164">
    <property type="gene designation" value="comtb"/>
</dbReference>
<dbReference type="eggNOG" id="KOG1663">
    <property type="taxonomic scope" value="Eukaryota"/>
</dbReference>
<dbReference type="HOGENOM" id="CLU_050461_5_0_1"/>
<dbReference type="InParanoid" id="A4IG53"/>
<dbReference type="OMA" id="SWMPILG"/>
<dbReference type="OrthoDB" id="186626at2759"/>
<dbReference type="PhylomeDB" id="A4IG53"/>
<dbReference type="TreeFam" id="TF329140"/>
<dbReference type="PRO" id="PR:A4IG53"/>
<dbReference type="Proteomes" id="UP000000437">
    <property type="component" value="Alternate scaffold 11"/>
</dbReference>
<dbReference type="Proteomes" id="UP000000437">
    <property type="component" value="Chromosome 11"/>
</dbReference>
<dbReference type="Bgee" id="ENSDARG00000025679">
    <property type="expression patterns" value="Expressed in retina and 14 other cell types or tissues"/>
</dbReference>
<dbReference type="ExpressionAtlas" id="A4IG53">
    <property type="expression patterns" value="baseline"/>
</dbReference>
<dbReference type="GO" id="GO:0005576">
    <property type="term" value="C:extracellular region"/>
    <property type="evidence" value="ECO:0007669"/>
    <property type="project" value="UniProtKB-SubCell"/>
</dbReference>
<dbReference type="GO" id="GO:0016206">
    <property type="term" value="F:catechol O-methyltransferase activity"/>
    <property type="evidence" value="ECO:0000318"/>
    <property type="project" value="GO_Central"/>
</dbReference>
<dbReference type="GO" id="GO:0000287">
    <property type="term" value="F:magnesium ion binding"/>
    <property type="evidence" value="ECO:0007669"/>
    <property type="project" value="InterPro"/>
</dbReference>
<dbReference type="GO" id="GO:0042424">
    <property type="term" value="P:catecholamine catabolic process"/>
    <property type="evidence" value="ECO:0000318"/>
    <property type="project" value="GO_Central"/>
</dbReference>
<dbReference type="GO" id="GO:0032502">
    <property type="term" value="P:developmental process"/>
    <property type="evidence" value="ECO:0000318"/>
    <property type="project" value="GO_Central"/>
</dbReference>
<dbReference type="GO" id="GO:0042417">
    <property type="term" value="P:dopamine metabolic process"/>
    <property type="evidence" value="ECO:0000318"/>
    <property type="project" value="GO_Central"/>
</dbReference>
<dbReference type="GO" id="GO:0032259">
    <property type="term" value="P:methylation"/>
    <property type="evidence" value="ECO:0007669"/>
    <property type="project" value="UniProtKB-KW"/>
</dbReference>
<dbReference type="CDD" id="cd02440">
    <property type="entry name" value="AdoMet_MTases"/>
    <property type="match status" value="1"/>
</dbReference>
<dbReference type="FunFam" id="3.40.50.150:FF:000054">
    <property type="entry name" value="Catechol O-methyltransferase"/>
    <property type="match status" value="1"/>
</dbReference>
<dbReference type="Gene3D" id="3.40.50.150">
    <property type="entry name" value="Vaccinia Virus protein VP39"/>
    <property type="match status" value="1"/>
</dbReference>
<dbReference type="InterPro" id="IPR017128">
    <property type="entry name" value="Catechol_O-MeTrfase_euk"/>
</dbReference>
<dbReference type="InterPro" id="IPR029063">
    <property type="entry name" value="SAM-dependent_MTases_sf"/>
</dbReference>
<dbReference type="InterPro" id="IPR002935">
    <property type="entry name" value="SAM_O-MeTrfase"/>
</dbReference>
<dbReference type="PANTHER" id="PTHR43836">
    <property type="entry name" value="CATECHOL O-METHYLTRANSFERASE 1-RELATED"/>
    <property type="match status" value="1"/>
</dbReference>
<dbReference type="PANTHER" id="PTHR43836:SF10">
    <property type="entry name" value="CATECHOL O-METHYLTRANSFERASE B"/>
    <property type="match status" value="1"/>
</dbReference>
<dbReference type="Pfam" id="PF01596">
    <property type="entry name" value="Methyltransf_3"/>
    <property type="match status" value="1"/>
</dbReference>
<dbReference type="PIRSF" id="PIRSF037177">
    <property type="entry name" value="Catechol_O-mtfrase_euk"/>
    <property type="match status" value="1"/>
</dbReference>
<dbReference type="SUPFAM" id="SSF53335">
    <property type="entry name" value="S-adenosyl-L-methionine-dependent methyltransferases"/>
    <property type="match status" value="1"/>
</dbReference>
<dbReference type="PROSITE" id="PS51682">
    <property type="entry name" value="SAM_OMT_I"/>
    <property type="match status" value="1"/>
</dbReference>
<keyword id="KW-0128">Catecholamine metabolism</keyword>
<keyword id="KW-0325">Glycoprotein</keyword>
<keyword id="KW-0460">Magnesium</keyword>
<keyword id="KW-0479">Metal-binding</keyword>
<keyword id="KW-0489">Methyltransferase</keyword>
<keyword id="KW-0531">Neurotransmitter degradation</keyword>
<keyword id="KW-1185">Reference proteome</keyword>
<keyword id="KW-0949">S-adenosyl-L-methionine</keyword>
<keyword id="KW-0964">Secreted</keyword>
<keyword id="KW-0732">Signal</keyword>
<keyword id="KW-0808">Transferase</keyword>
<organism evidence="12">
    <name type="scientific">Danio rerio</name>
    <name type="common">Zebrafish</name>
    <name type="synonym">Brachydanio rerio</name>
    <dbReference type="NCBI Taxonomy" id="7955"/>
    <lineage>
        <taxon>Eukaryota</taxon>
        <taxon>Metazoa</taxon>
        <taxon>Chordata</taxon>
        <taxon>Craniata</taxon>
        <taxon>Vertebrata</taxon>
        <taxon>Euteleostomi</taxon>
        <taxon>Actinopterygii</taxon>
        <taxon>Neopterygii</taxon>
        <taxon>Teleostei</taxon>
        <taxon>Ostariophysi</taxon>
        <taxon>Cypriniformes</taxon>
        <taxon>Danionidae</taxon>
        <taxon>Danioninae</taxon>
        <taxon>Danio</taxon>
    </lineage>
</organism>
<evidence type="ECO:0000250" key="1">
    <source>
        <dbReference type="UniProtKB" id="P21964"/>
    </source>
</evidence>
<evidence type="ECO:0000255" key="2"/>
<evidence type="ECO:0000255" key="3">
    <source>
        <dbReference type="PIRSR" id="PIRSR037177-1"/>
    </source>
</evidence>
<evidence type="ECO:0000255" key="4">
    <source>
        <dbReference type="PIRSR" id="PIRSR037177-2"/>
    </source>
</evidence>
<evidence type="ECO:0000255" key="5">
    <source>
        <dbReference type="PIRSR" id="PIRSR037177-3"/>
    </source>
</evidence>
<evidence type="ECO:0000255" key="6">
    <source>
        <dbReference type="PROSITE-ProRule" id="PRU00498"/>
    </source>
</evidence>
<evidence type="ECO:0000255" key="7">
    <source>
        <dbReference type="PROSITE-ProRule" id="PRU01019"/>
    </source>
</evidence>
<evidence type="ECO:0000269" key="8">
    <source>
    </source>
</evidence>
<evidence type="ECO:0000303" key="9">
    <source>
    </source>
</evidence>
<evidence type="ECO:0000305" key="10"/>
<evidence type="ECO:0000312" key="11">
    <source>
        <dbReference type="EMBL" id="AAI34932.1"/>
    </source>
</evidence>
<evidence type="ECO:0000312" key="12">
    <source>
        <dbReference type="Proteomes" id="UP000000437"/>
    </source>
</evidence>
<proteinExistence type="evidence at transcript level"/>
<sequence length="264" mass="29872">MLGVLLCWCLGASVLLYVLYSWLIPAAVQFNGSLALLWHDVIVERALDSLTRSTRPQRLLKAVKQHATRGDPQSVISAIDHFCRHREWAMNVGDEKGCILDSVVSELNPEKVLELGTYCGYSTVRIARLLPPGARLITLEFNPDYAVIARQVIAWAGIEDKVQLVEGASEDWIPRMKEHFGIETFDLVFLDHWKDHYLPDTKLMEGCGLLRKGTVLLADNVICPGVPDYLEYVRNSRSYKSCYFKSHLEYTRAEDGLEKSVFLG</sequence>
<gene>
    <name evidence="9" type="primary">comtb</name>
</gene>
<reference evidence="12" key="1">
    <citation type="journal article" date="2013" name="Nature">
        <title>The zebrafish reference genome sequence and its relationship to the human genome.</title>
        <authorList>
            <person name="Howe K."/>
            <person name="Clark M.D."/>
            <person name="Torroja C.F."/>
            <person name="Torrance J."/>
            <person name="Berthelot C."/>
            <person name="Muffato M."/>
            <person name="Collins J.E."/>
            <person name="Humphray S."/>
            <person name="McLaren K."/>
            <person name="Matthews L."/>
            <person name="McLaren S."/>
            <person name="Sealy I."/>
            <person name="Caccamo M."/>
            <person name="Churcher C."/>
            <person name="Scott C."/>
            <person name="Barrett J.C."/>
            <person name="Koch R."/>
            <person name="Rauch G.J."/>
            <person name="White S."/>
            <person name="Chow W."/>
            <person name="Kilian B."/>
            <person name="Quintais L.T."/>
            <person name="Guerra-Assuncao J.A."/>
            <person name="Zhou Y."/>
            <person name="Gu Y."/>
            <person name="Yen J."/>
            <person name="Vogel J.H."/>
            <person name="Eyre T."/>
            <person name="Redmond S."/>
            <person name="Banerjee R."/>
            <person name="Chi J."/>
            <person name="Fu B."/>
            <person name="Langley E."/>
            <person name="Maguire S.F."/>
            <person name="Laird G.K."/>
            <person name="Lloyd D."/>
            <person name="Kenyon E."/>
            <person name="Donaldson S."/>
            <person name="Sehra H."/>
            <person name="Almeida-King J."/>
            <person name="Loveland J."/>
            <person name="Trevanion S."/>
            <person name="Jones M."/>
            <person name="Quail M."/>
            <person name="Willey D."/>
            <person name="Hunt A."/>
            <person name="Burton J."/>
            <person name="Sims S."/>
            <person name="McLay K."/>
            <person name="Plumb B."/>
            <person name="Davis J."/>
            <person name="Clee C."/>
            <person name="Oliver K."/>
            <person name="Clark R."/>
            <person name="Riddle C."/>
            <person name="Elliot D."/>
            <person name="Threadgold G."/>
            <person name="Harden G."/>
            <person name="Ware D."/>
            <person name="Begum S."/>
            <person name="Mortimore B."/>
            <person name="Kerry G."/>
            <person name="Heath P."/>
            <person name="Phillimore B."/>
            <person name="Tracey A."/>
            <person name="Corby N."/>
            <person name="Dunn M."/>
            <person name="Johnson C."/>
            <person name="Wood J."/>
            <person name="Clark S."/>
            <person name="Pelan S."/>
            <person name="Griffiths G."/>
            <person name="Smith M."/>
            <person name="Glithero R."/>
            <person name="Howden P."/>
            <person name="Barker N."/>
            <person name="Lloyd C."/>
            <person name="Stevens C."/>
            <person name="Harley J."/>
            <person name="Holt K."/>
            <person name="Panagiotidis G."/>
            <person name="Lovell J."/>
            <person name="Beasley H."/>
            <person name="Henderson C."/>
            <person name="Gordon D."/>
            <person name="Auger K."/>
            <person name="Wright D."/>
            <person name="Collins J."/>
            <person name="Raisen C."/>
            <person name="Dyer L."/>
            <person name="Leung K."/>
            <person name="Robertson L."/>
            <person name="Ambridge K."/>
            <person name="Leongamornlert D."/>
            <person name="McGuire S."/>
            <person name="Gilderthorp R."/>
            <person name="Griffiths C."/>
            <person name="Manthravadi D."/>
            <person name="Nichol S."/>
            <person name="Barker G."/>
            <person name="Whitehead S."/>
            <person name="Kay M."/>
            <person name="Brown J."/>
            <person name="Murnane C."/>
            <person name="Gray E."/>
            <person name="Humphries M."/>
            <person name="Sycamore N."/>
            <person name="Barker D."/>
            <person name="Saunders D."/>
            <person name="Wallis J."/>
            <person name="Babbage A."/>
            <person name="Hammond S."/>
            <person name="Mashreghi-Mohammadi M."/>
            <person name="Barr L."/>
            <person name="Martin S."/>
            <person name="Wray P."/>
            <person name="Ellington A."/>
            <person name="Matthews N."/>
            <person name="Ellwood M."/>
            <person name="Woodmansey R."/>
            <person name="Clark G."/>
            <person name="Cooper J."/>
            <person name="Tromans A."/>
            <person name="Grafham D."/>
            <person name="Skuce C."/>
            <person name="Pandian R."/>
            <person name="Andrews R."/>
            <person name="Harrison E."/>
            <person name="Kimberley A."/>
            <person name="Garnett J."/>
            <person name="Fosker N."/>
            <person name="Hall R."/>
            <person name="Garner P."/>
            <person name="Kelly D."/>
            <person name="Bird C."/>
            <person name="Palmer S."/>
            <person name="Gehring I."/>
            <person name="Berger A."/>
            <person name="Dooley C.M."/>
            <person name="Ersan-Urun Z."/>
            <person name="Eser C."/>
            <person name="Geiger H."/>
            <person name="Geisler M."/>
            <person name="Karotki L."/>
            <person name="Kirn A."/>
            <person name="Konantz J."/>
            <person name="Konantz M."/>
            <person name="Oberlander M."/>
            <person name="Rudolph-Geiger S."/>
            <person name="Teucke M."/>
            <person name="Lanz C."/>
            <person name="Raddatz G."/>
            <person name="Osoegawa K."/>
            <person name="Zhu B."/>
            <person name="Rapp A."/>
            <person name="Widaa S."/>
            <person name="Langford C."/>
            <person name="Yang F."/>
            <person name="Schuster S.C."/>
            <person name="Carter N.P."/>
            <person name="Harrow J."/>
            <person name="Ning Z."/>
            <person name="Herrero J."/>
            <person name="Searle S.M."/>
            <person name="Enright A."/>
            <person name="Geisler R."/>
            <person name="Plasterk R.H."/>
            <person name="Lee C."/>
            <person name="Westerfield M."/>
            <person name="de Jong P.J."/>
            <person name="Zon L.I."/>
            <person name="Postlethwait J.H."/>
            <person name="Nusslein-Volhard C."/>
            <person name="Hubbard T.J."/>
            <person name="Roest Crollius H."/>
            <person name="Rogers J."/>
            <person name="Stemple D.L."/>
        </authorList>
    </citation>
    <scope>NUCLEOTIDE SEQUENCE [LARGE SCALE GENOMIC DNA]</scope>
    <source>
        <strain>Tuebingen</strain>
    </source>
</reference>
<reference evidence="11" key="2">
    <citation type="submission" date="2007-03" db="EMBL/GenBank/DDBJ databases">
        <authorList>
            <consortium name="NIH - Zebrafish Gene Collection (ZGC) project"/>
        </authorList>
    </citation>
    <scope>NUCLEOTIDE SEQUENCE [LARGE SCALE MRNA]</scope>
    <source>
        <tissue evidence="11">Testis</tissue>
    </source>
</reference>
<reference evidence="10" key="3">
    <citation type="journal article" date="2017" name="Biochem. Pharmacol.">
        <title>Distribution, properties, and inhibitor sensitivity of zebrafish catechol-O-methyl transferases (COMT).</title>
        <authorList>
            <person name="Semenova S."/>
            <person name="Rozov S."/>
            <person name="Panula P."/>
        </authorList>
    </citation>
    <scope>TISSUE SPECIFICITY</scope>
</reference>
<protein>
    <recommendedName>
        <fullName evidence="9">Catechol O-methyltransferase B</fullName>
        <ecNumber evidence="1">2.1.1.6</ecNumber>
    </recommendedName>
</protein>
<accession>A4IG53</accession>
<accession>Q7SZX0</accession>
<name>COMTB_DANRE</name>